<dbReference type="EC" id="3.1.21.10" evidence="1"/>
<dbReference type="EMBL" id="CR543861">
    <property type="protein sequence ID" value="CAG68861.1"/>
    <property type="status" value="ALT_INIT"/>
    <property type="molecule type" value="Genomic_DNA"/>
</dbReference>
<dbReference type="RefSeq" id="WP_026056842.1">
    <property type="nucleotide sequence ID" value="NC_005966.1"/>
</dbReference>
<dbReference type="SMR" id="Q6FAQ2"/>
<dbReference type="STRING" id="202950.GCA_001485005_00333"/>
<dbReference type="GeneID" id="45234396"/>
<dbReference type="KEGG" id="aci:ACIAD2041"/>
<dbReference type="eggNOG" id="COG0817">
    <property type="taxonomic scope" value="Bacteria"/>
</dbReference>
<dbReference type="HOGENOM" id="CLU_091257_2_1_6"/>
<dbReference type="OrthoDB" id="9805499at2"/>
<dbReference type="BioCyc" id="ASP62977:ACIAD_RS09385-MONOMER"/>
<dbReference type="Proteomes" id="UP000000430">
    <property type="component" value="Chromosome"/>
</dbReference>
<dbReference type="GO" id="GO:0005737">
    <property type="term" value="C:cytoplasm"/>
    <property type="evidence" value="ECO:0007669"/>
    <property type="project" value="UniProtKB-SubCell"/>
</dbReference>
<dbReference type="GO" id="GO:0048476">
    <property type="term" value="C:Holliday junction resolvase complex"/>
    <property type="evidence" value="ECO:0007669"/>
    <property type="project" value="UniProtKB-UniRule"/>
</dbReference>
<dbReference type="GO" id="GO:0008821">
    <property type="term" value="F:crossover junction DNA endonuclease activity"/>
    <property type="evidence" value="ECO:0007669"/>
    <property type="project" value="UniProtKB-UniRule"/>
</dbReference>
<dbReference type="GO" id="GO:0003677">
    <property type="term" value="F:DNA binding"/>
    <property type="evidence" value="ECO:0007669"/>
    <property type="project" value="UniProtKB-KW"/>
</dbReference>
<dbReference type="GO" id="GO:0000287">
    <property type="term" value="F:magnesium ion binding"/>
    <property type="evidence" value="ECO:0007669"/>
    <property type="project" value="UniProtKB-UniRule"/>
</dbReference>
<dbReference type="GO" id="GO:0006310">
    <property type="term" value="P:DNA recombination"/>
    <property type="evidence" value="ECO:0007669"/>
    <property type="project" value="UniProtKB-UniRule"/>
</dbReference>
<dbReference type="GO" id="GO:0006281">
    <property type="term" value="P:DNA repair"/>
    <property type="evidence" value="ECO:0007669"/>
    <property type="project" value="UniProtKB-UniRule"/>
</dbReference>
<dbReference type="CDD" id="cd16962">
    <property type="entry name" value="RuvC"/>
    <property type="match status" value="1"/>
</dbReference>
<dbReference type="FunFam" id="3.30.420.10:FF:000002">
    <property type="entry name" value="Crossover junction endodeoxyribonuclease RuvC"/>
    <property type="match status" value="1"/>
</dbReference>
<dbReference type="Gene3D" id="3.30.420.10">
    <property type="entry name" value="Ribonuclease H-like superfamily/Ribonuclease H"/>
    <property type="match status" value="1"/>
</dbReference>
<dbReference type="HAMAP" id="MF_00034">
    <property type="entry name" value="RuvC"/>
    <property type="match status" value="1"/>
</dbReference>
<dbReference type="InterPro" id="IPR012337">
    <property type="entry name" value="RNaseH-like_sf"/>
</dbReference>
<dbReference type="InterPro" id="IPR036397">
    <property type="entry name" value="RNaseH_sf"/>
</dbReference>
<dbReference type="InterPro" id="IPR020563">
    <property type="entry name" value="X-over_junc_endoDNase_Mg_BS"/>
</dbReference>
<dbReference type="InterPro" id="IPR002176">
    <property type="entry name" value="X-over_junc_endoDNase_RuvC"/>
</dbReference>
<dbReference type="NCBIfam" id="TIGR00228">
    <property type="entry name" value="ruvC"/>
    <property type="match status" value="1"/>
</dbReference>
<dbReference type="PANTHER" id="PTHR30194">
    <property type="entry name" value="CROSSOVER JUNCTION ENDODEOXYRIBONUCLEASE RUVC"/>
    <property type="match status" value="1"/>
</dbReference>
<dbReference type="PANTHER" id="PTHR30194:SF3">
    <property type="entry name" value="CROSSOVER JUNCTION ENDODEOXYRIBONUCLEASE RUVC"/>
    <property type="match status" value="1"/>
</dbReference>
<dbReference type="Pfam" id="PF02075">
    <property type="entry name" value="RuvC"/>
    <property type="match status" value="1"/>
</dbReference>
<dbReference type="PRINTS" id="PR00696">
    <property type="entry name" value="RSOLVASERUVC"/>
</dbReference>
<dbReference type="SUPFAM" id="SSF53098">
    <property type="entry name" value="Ribonuclease H-like"/>
    <property type="match status" value="1"/>
</dbReference>
<dbReference type="PROSITE" id="PS01321">
    <property type="entry name" value="RUVC"/>
    <property type="match status" value="1"/>
</dbReference>
<comment type="function">
    <text evidence="1">The RuvA-RuvB-RuvC complex processes Holliday junction (HJ) DNA during genetic recombination and DNA repair. Endonuclease that resolves HJ intermediates. Cleaves cruciform DNA by making single-stranded nicks across the HJ at symmetrical positions within the homologous arms, yielding a 5'-phosphate and a 3'-hydroxyl group; requires a central core of homology in the junction. The consensus cleavage sequence is 5'-(A/T)TT(C/G)-3'. Cleavage occurs on the 3'-side of the TT dinucleotide at the point of strand exchange. HJ branch migration catalyzed by RuvA-RuvB allows RuvC to scan DNA until it finds its consensus sequence, where it cleaves and resolves the cruciform DNA.</text>
</comment>
<comment type="catalytic activity">
    <reaction evidence="1">
        <text>Endonucleolytic cleavage at a junction such as a reciprocal single-stranded crossover between two homologous DNA duplexes (Holliday junction).</text>
        <dbReference type="EC" id="3.1.21.10"/>
    </reaction>
</comment>
<comment type="cofactor">
    <cofactor evidence="1">
        <name>Mg(2+)</name>
        <dbReference type="ChEBI" id="CHEBI:18420"/>
    </cofactor>
    <text evidence="1">Binds 2 Mg(2+) ion per subunit.</text>
</comment>
<comment type="subunit">
    <text evidence="1">Homodimer which binds Holliday junction (HJ) DNA. The HJ becomes 2-fold symmetrical on binding to RuvC with unstacked arms; it has a different conformation from HJ DNA in complex with RuvA. In the full resolvosome a probable DNA-RuvA(4)-RuvB(12)-RuvC(2) complex forms which resolves the HJ.</text>
</comment>
<comment type="subcellular location">
    <subcellularLocation>
        <location evidence="1">Cytoplasm</location>
    </subcellularLocation>
</comment>
<comment type="similarity">
    <text evidence="1">Belongs to the RuvC family.</text>
</comment>
<comment type="sequence caution" evidence="2">
    <conflict type="erroneous initiation">
        <sequence resource="EMBL-CDS" id="CAG68861"/>
    </conflict>
    <text>Extended N-terminus.</text>
</comment>
<gene>
    <name evidence="1" type="primary">ruvC</name>
    <name type="ordered locus">ACIAD2041</name>
</gene>
<protein>
    <recommendedName>
        <fullName evidence="1">Crossover junction endodeoxyribonuclease RuvC</fullName>
        <ecNumber evidence="1">3.1.21.10</ecNumber>
    </recommendedName>
    <alternativeName>
        <fullName evidence="1">Holliday junction nuclease RuvC</fullName>
    </alternativeName>
    <alternativeName>
        <fullName evidence="1">Holliday junction resolvase RuvC</fullName>
    </alternativeName>
</protein>
<accession>Q6FAQ2</accession>
<feature type="chain" id="PRO_0000225117" description="Crossover junction endodeoxyribonuclease RuvC">
    <location>
        <begin position="1"/>
        <end position="181"/>
    </location>
</feature>
<feature type="active site" evidence="1">
    <location>
        <position position="8"/>
    </location>
</feature>
<feature type="active site" evidence="1">
    <location>
        <position position="67"/>
    </location>
</feature>
<feature type="active site" evidence="1">
    <location>
        <position position="139"/>
    </location>
</feature>
<feature type="binding site" evidence="1">
    <location>
        <position position="8"/>
    </location>
    <ligand>
        <name>Mg(2+)</name>
        <dbReference type="ChEBI" id="CHEBI:18420"/>
        <label>1</label>
    </ligand>
</feature>
<feature type="binding site" evidence="1">
    <location>
        <position position="67"/>
    </location>
    <ligand>
        <name>Mg(2+)</name>
        <dbReference type="ChEBI" id="CHEBI:18420"/>
        <label>2</label>
    </ligand>
</feature>
<feature type="binding site" evidence="1">
    <location>
        <position position="139"/>
    </location>
    <ligand>
        <name>Mg(2+)</name>
        <dbReference type="ChEBI" id="CHEBI:18420"/>
        <label>1</label>
    </ligand>
</feature>
<evidence type="ECO:0000255" key="1">
    <source>
        <dbReference type="HAMAP-Rule" id="MF_00034"/>
    </source>
</evidence>
<evidence type="ECO:0000305" key="2"/>
<organism>
    <name type="scientific">Acinetobacter baylyi (strain ATCC 33305 / BD413 / ADP1)</name>
    <dbReference type="NCBI Taxonomy" id="62977"/>
    <lineage>
        <taxon>Bacteria</taxon>
        <taxon>Pseudomonadati</taxon>
        <taxon>Pseudomonadota</taxon>
        <taxon>Gammaproteobacteria</taxon>
        <taxon>Moraxellales</taxon>
        <taxon>Moraxellaceae</taxon>
        <taxon>Acinetobacter</taxon>
    </lineage>
</organism>
<sequence length="181" mass="19477">MPLIIGIDPGSRLTGYGIIEKNGNELRFIDAGTIRTESQDMPERLKRIFAGVERIVKFHGPTQAAVEQVFMAQNPDSALKLGQARGAAIAALVNLDLEVAEYTARQIKQSVVGYGAADKEQVQMMVMRILNLTIKPQSDAADALAAAICHAHASGSMSKMAVLNALGGMARGRSRSSTRRR</sequence>
<proteinExistence type="inferred from homology"/>
<keyword id="KW-0963">Cytoplasm</keyword>
<keyword id="KW-0227">DNA damage</keyword>
<keyword id="KW-0233">DNA recombination</keyword>
<keyword id="KW-0234">DNA repair</keyword>
<keyword id="KW-0238">DNA-binding</keyword>
<keyword id="KW-0255">Endonuclease</keyword>
<keyword id="KW-0378">Hydrolase</keyword>
<keyword id="KW-0460">Magnesium</keyword>
<keyword id="KW-0479">Metal-binding</keyword>
<keyword id="KW-0540">Nuclease</keyword>
<name>RUVC_ACIAD</name>
<reference key="1">
    <citation type="journal article" date="2004" name="Nucleic Acids Res.">
        <title>Unique features revealed by the genome sequence of Acinetobacter sp. ADP1, a versatile and naturally transformation competent bacterium.</title>
        <authorList>
            <person name="Barbe V."/>
            <person name="Vallenet D."/>
            <person name="Fonknechten N."/>
            <person name="Kreimeyer A."/>
            <person name="Oztas S."/>
            <person name="Labarre L."/>
            <person name="Cruveiller S."/>
            <person name="Robert C."/>
            <person name="Duprat S."/>
            <person name="Wincker P."/>
            <person name="Ornston L.N."/>
            <person name="Weissenbach J."/>
            <person name="Marliere P."/>
            <person name="Cohen G.N."/>
            <person name="Medigue C."/>
        </authorList>
    </citation>
    <scope>NUCLEOTIDE SEQUENCE [LARGE SCALE GENOMIC DNA]</scope>
    <source>
        <strain>ATCC 33305 / BD413 / ADP1</strain>
    </source>
</reference>